<evidence type="ECO:0000269" key="1">
    <source>
    </source>
</evidence>
<evidence type="ECO:0000269" key="2">
    <source>
    </source>
</evidence>
<evidence type="ECO:0000269" key="3">
    <source>
    </source>
</evidence>
<evidence type="ECO:0000269" key="4">
    <source>
    </source>
</evidence>
<evidence type="ECO:0000269" key="5">
    <source>
    </source>
</evidence>
<evidence type="ECO:0000269" key="6">
    <source>
    </source>
</evidence>
<evidence type="ECO:0000269" key="7">
    <source>
    </source>
</evidence>
<evidence type="ECO:0000269" key="8">
    <source>
    </source>
</evidence>
<evidence type="ECO:0000269" key="9">
    <source>
    </source>
</evidence>
<evidence type="ECO:0000269" key="10">
    <source>
    </source>
</evidence>
<evidence type="ECO:0000269" key="11">
    <source>
    </source>
</evidence>
<evidence type="ECO:0000269" key="12">
    <source>
    </source>
</evidence>
<evidence type="ECO:0000269" key="13">
    <source>
    </source>
</evidence>
<evidence type="ECO:0000269" key="14">
    <source>
    </source>
</evidence>
<evidence type="ECO:0000305" key="15"/>
<evidence type="ECO:0000305" key="16">
    <source>
    </source>
</evidence>
<evidence type="ECO:0007829" key="17">
    <source>
        <dbReference type="PDB" id="6IYC"/>
    </source>
</evidence>
<evidence type="ECO:0007829" key="18">
    <source>
        <dbReference type="PDB" id="8KCS"/>
    </source>
</evidence>
<sequence>MNLERVSNEEKLNLCRKYYLGGFAFLPFLWLVNIFWFFREAFLVPAYTEQSQIKGYVWRSAVGFLFWVIVLTSWITIFQIYRPRWGALGDYLSFTIPLGTP</sequence>
<comment type="function">
    <text evidence="3 5 6 7 9 13 14 15">Essential subunit of the gamma-secretase complex, an endoprotease complex that catalyzes the intramembrane cleavage of integral membrane proteins such as Notch receptors and APP (amyloid-beta precursor protein) (PubMed:12522139, PubMed:12679784, PubMed:12740439, PubMed:12763021, PubMed:24941111, PubMed:30598546, PubMed:30630874). The gamma-secretase complex plays a role in Notch and Wnt signaling cascades and regulation of downstream processes via its role in processing key regulatory proteins, and by regulating cytosolic CTNNB1 levels (Probable). PSENEN modulates both endoproteolysis of presenilin and gamma-secretase activity (PubMed:12522139, PubMed:12679784, PubMed:12740439, PubMed:12763021, PubMed:24941111).</text>
</comment>
<comment type="subunit">
    <text evidence="2 3 6 9 10 11 12 13 14">The functional gamma-secretase complex is composed of at least four polypeptides: a presenilin homodimer (PSEN1 or PSEN2), nicastrin (NCSTN), APH1 (APH1A or APH1B) and PSENEN.</text>
</comment>
<comment type="interaction">
    <interactant intactId="EBI-998468">
        <id>Q9NZ42</id>
    </interactant>
    <interactant intactId="EBI-77613">
        <id>P05067</id>
        <label>APP</label>
    </interactant>
    <organismsDiffer>false</organismsDiffer>
    <experiments>3</experiments>
</comment>
<comment type="interaction">
    <interactant intactId="EBI-998468">
        <id>Q9NZ42</id>
    </interactant>
    <interactant intactId="EBI-17233035">
        <id>Q9BUF7-2</id>
        <label>CRB3</label>
    </interactant>
    <organismsDiffer>false</organismsDiffer>
    <experiments>3</experiments>
</comment>
<comment type="interaction">
    <interactant intactId="EBI-998468">
        <id>Q9NZ42</id>
    </interactant>
    <interactant intactId="EBI-997830">
        <id>Q15438</id>
        <label>CYTH1</label>
    </interactant>
    <organismsDiffer>false</organismsDiffer>
    <experiments>3</experiments>
</comment>
<comment type="interaction">
    <interactant intactId="EBI-998468">
        <id>Q9NZ42</id>
    </interactant>
    <interactant intactId="EBI-713279">
        <id>P02792</id>
        <label>FTL</label>
    </interactant>
    <organismsDiffer>false</organismsDiffer>
    <experiments>4</experiments>
</comment>
<comment type="interaction">
    <interactant intactId="EBI-998468">
        <id>Q9NZ42</id>
    </interactant>
    <interactant intactId="EBI-515315">
        <id>P06241</id>
        <label>FYN</label>
    </interactant>
    <organismsDiffer>false</organismsDiffer>
    <experiments>3</experiments>
</comment>
<comment type="interaction">
    <interactant intactId="EBI-998468">
        <id>Q9NZ42</id>
    </interactant>
    <interactant intactId="EBI-998440">
        <id>Q92542</id>
        <label>NCSTN</label>
    </interactant>
    <organismsDiffer>false</organismsDiffer>
    <experiments>4</experiments>
</comment>
<comment type="interaction">
    <interactant intactId="EBI-998468">
        <id>Q9NZ42</id>
    </interactant>
    <interactant intactId="EBI-297277">
        <id>P49768</id>
        <label>PSEN1</label>
    </interactant>
    <organismsDiffer>false</organismsDiffer>
    <experiments>4</experiments>
</comment>
<comment type="interaction">
    <interactant intactId="EBI-998468">
        <id>Q9NZ42</id>
    </interactant>
    <interactant intactId="EBI-11047108">
        <id>P49768-2</id>
        <label>PSEN1</label>
    </interactant>
    <organismsDiffer>false</organismsDiffer>
    <experiments>3</experiments>
</comment>
<comment type="interaction">
    <interactant intactId="EBI-998468">
        <id>Q9NZ42</id>
    </interactant>
    <interactant intactId="EBI-18114847">
        <id>Q12908</id>
        <label>SLC10A2</label>
    </interactant>
    <organismsDiffer>false</organismsDiffer>
    <experiments>3</experiments>
</comment>
<comment type="interaction">
    <interactant intactId="EBI-998468">
        <id>Q9NZ42</id>
    </interactant>
    <interactant intactId="EBI-18159983">
        <id>Q3KNW5</id>
        <label>SLC10A6</label>
    </interactant>
    <organismsDiffer>false</organismsDiffer>
    <experiments>3</experiments>
</comment>
<comment type="interaction">
    <interactant intactId="EBI-998468">
        <id>Q9NZ42</id>
    </interactant>
    <interactant intactId="EBI-998422">
        <id>P49755</id>
        <label>TMED10</label>
    </interactant>
    <organismsDiffer>false</organismsDiffer>
    <experiments>3</experiments>
</comment>
<comment type="subcellular location">
    <subcellularLocation>
        <location evidence="3 4">Endoplasmic reticulum membrane</location>
        <topology evidence="4 10 11 12 13 14">Multi-pass membrane protein</topology>
    </subcellularLocation>
    <subcellularLocation>
        <location evidence="3 4">Golgi apparatus</location>
        <location evidence="3 4">Golgi stack membrane</location>
        <topology evidence="4 10 11 12 13 14">Multi-pass membrane protein</topology>
    </subcellularLocation>
    <subcellularLocation>
        <location evidence="9">Cell membrane</location>
        <topology evidence="4 10 11 12">Multi-pass membrane protein</topology>
    </subcellularLocation>
    <subcellularLocation>
        <location evidence="2">Membrane</location>
        <topology evidence="4 10 11 12 13 14">Multi-pass membrane protein</topology>
    </subcellularLocation>
    <text evidence="4">Predominantly located in the endoplasmic reticulum and in the cis-Golgi.</text>
</comment>
<comment type="tissue specificity">
    <text evidence="1 6">Widely expressed. Expressed in leukocytes, lung, placenta, small intestine, liver, kidney, spleen thymus, skeletal muscle, heart and brain.</text>
</comment>
<comment type="disease" evidence="8">
    <disease id="DI-02996">
        <name>Acne inversa, familial, 2, with or without Dowling-Degos disease</name>
        <acronym>ACNINV2</acronym>
        <description>An autosomal dominant form of acne inversa, a chronic relapsing inflammatory disease of the hair follicles characterized by recurrent draining sinuses, painful skin abscesses, and disfiguring scars. Manifestations typically appear after puberty. Some ACNINV2 patients also exhibit reticulate hyperpigmentation consistent with Dowling-Degos disease.</description>
        <dbReference type="MIM" id="613736"/>
    </disease>
    <text>The disease is caused by variants affecting the gene represented in this entry.</text>
</comment>
<comment type="similarity">
    <text evidence="15">Belongs to the PEN-2 family.</text>
</comment>
<comment type="caution">
    <text evidence="4 11 13 14">The high-resolution electron microscopy structures indicate that the N-terminus is cytoplasmic, followed by two short helices that dip into the membrane, but do not cross it (PubMed:26280335). In contrast, results based on mutagenesis to create N-glycosylation sites indicate that the N-terminus is lumenal (PubMed:12639958, PubMed:30598546, PubMed:30630874). Both studies indicate that the C-terminus is lumenal (PubMed:12639958, PubMed:26280335).</text>
</comment>
<proteinExistence type="evidence at protein level"/>
<name>PEN2_HUMAN</name>
<keyword id="KW-0002">3D-structure</keyword>
<keyword id="KW-1003">Cell membrane</keyword>
<keyword id="KW-0256">Endoplasmic reticulum</keyword>
<keyword id="KW-0333">Golgi apparatus</keyword>
<keyword id="KW-0472">Membrane</keyword>
<keyword id="KW-0914">Notch signaling pathway</keyword>
<keyword id="KW-1267">Proteomics identification</keyword>
<keyword id="KW-1185">Reference proteome</keyword>
<keyword id="KW-0812">Transmembrane</keyword>
<keyword id="KW-1133">Transmembrane helix</keyword>
<protein>
    <recommendedName>
        <fullName>Gamma-secretase subunit PEN-2</fullName>
    </recommendedName>
    <alternativeName>
        <fullName>Presenilin enhancer protein 2</fullName>
    </alternativeName>
</protein>
<dbReference type="EMBL" id="AF220053">
    <property type="protein sequence ID" value="AAF67646.1"/>
    <property type="molecule type" value="mRNA"/>
</dbReference>
<dbReference type="EMBL" id="AK312233">
    <property type="protein sequence ID" value="BAG35166.1"/>
    <property type="molecule type" value="mRNA"/>
</dbReference>
<dbReference type="EMBL" id="BC009575">
    <property type="protein sequence ID" value="AAH09575.1"/>
    <property type="molecule type" value="mRNA"/>
</dbReference>
<dbReference type="CCDS" id="CCDS12474.1"/>
<dbReference type="RefSeq" id="NP_001268461.1">
    <property type="nucleotide sequence ID" value="NM_001281532.3"/>
</dbReference>
<dbReference type="RefSeq" id="NP_758844.1">
    <property type="nucleotide sequence ID" value="NM_172341.4"/>
</dbReference>
<dbReference type="PDB" id="5A63">
    <property type="method" value="EM"/>
    <property type="resolution" value="3.40 A"/>
    <property type="chains" value="D=1-101"/>
</dbReference>
<dbReference type="PDB" id="5FN2">
    <property type="method" value="EM"/>
    <property type="resolution" value="4.20 A"/>
    <property type="chains" value="D=1-101"/>
</dbReference>
<dbReference type="PDB" id="5FN3">
    <property type="method" value="EM"/>
    <property type="resolution" value="4.10 A"/>
    <property type="chains" value="D=1-101"/>
</dbReference>
<dbReference type="PDB" id="5FN4">
    <property type="method" value="EM"/>
    <property type="resolution" value="4.00 A"/>
    <property type="chains" value="D=1-101"/>
</dbReference>
<dbReference type="PDB" id="5FN5">
    <property type="method" value="EM"/>
    <property type="resolution" value="4.30 A"/>
    <property type="chains" value="D=1-101"/>
</dbReference>
<dbReference type="PDB" id="6IDF">
    <property type="method" value="EM"/>
    <property type="resolution" value="2.70 A"/>
    <property type="chains" value="D=1-101"/>
</dbReference>
<dbReference type="PDB" id="6IYC">
    <property type="method" value="EM"/>
    <property type="resolution" value="2.60 A"/>
    <property type="chains" value="D=1-101"/>
</dbReference>
<dbReference type="PDB" id="6LQG">
    <property type="method" value="EM"/>
    <property type="resolution" value="3.10 A"/>
    <property type="chains" value="D=2-101"/>
</dbReference>
<dbReference type="PDB" id="6LR4">
    <property type="method" value="EM"/>
    <property type="resolution" value="3.00 A"/>
    <property type="chains" value="D=2-101"/>
</dbReference>
<dbReference type="PDB" id="7C9I">
    <property type="method" value="EM"/>
    <property type="resolution" value="3.10 A"/>
    <property type="chains" value="D=2-101"/>
</dbReference>
<dbReference type="PDB" id="7D8X">
    <property type="method" value="EM"/>
    <property type="resolution" value="2.60 A"/>
    <property type="chains" value="D=2-101"/>
</dbReference>
<dbReference type="PDB" id="7Y5T">
    <property type="method" value="EM"/>
    <property type="resolution" value="2.90 A"/>
    <property type="chains" value="D=1-101"/>
</dbReference>
<dbReference type="PDB" id="7Y5X">
    <property type="method" value="EM"/>
    <property type="resolution" value="3.00 A"/>
    <property type="chains" value="D=1-101"/>
</dbReference>
<dbReference type="PDB" id="7Y5Z">
    <property type="method" value="EM"/>
    <property type="resolution" value="3.40 A"/>
    <property type="chains" value="D=1-101"/>
</dbReference>
<dbReference type="PDB" id="8IM7">
    <property type="method" value="EM"/>
    <property type="resolution" value="3.40 A"/>
    <property type="chains" value="D=1-101"/>
</dbReference>
<dbReference type="PDB" id="8K8E">
    <property type="method" value="EM"/>
    <property type="resolution" value="2.60 A"/>
    <property type="chains" value="D=1-101"/>
</dbReference>
<dbReference type="PDB" id="8KCO">
    <property type="method" value="EM"/>
    <property type="resolution" value="2.80 A"/>
    <property type="chains" value="D=1-101"/>
</dbReference>
<dbReference type="PDB" id="8KCP">
    <property type="method" value="EM"/>
    <property type="resolution" value="3.00 A"/>
    <property type="chains" value="D=1-101"/>
</dbReference>
<dbReference type="PDB" id="8KCS">
    <property type="method" value="EM"/>
    <property type="resolution" value="2.40 A"/>
    <property type="chains" value="D=1-101"/>
</dbReference>
<dbReference type="PDB" id="8KCT">
    <property type="method" value="EM"/>
    <property type="resolution" value="2.60 A"/>
    <property type="chains" value="D=1-101"/>
</dbReference>
<dbReference type="PDB" id="8KCU">
    <property type="method" value="EM"/>
    <property type="resolution" value="2.70 A"/>
    <property type="chains" value="D=1-101"/>
</dbReference>
<dbReference type="PDB" id="8OQY">
    <property type="method" value="EM"/>
    <property type="resolution" value="3.30 A"/>
    <property type="chains" value="D=1-101"/>
</dbReference>
<dbReference type="PDB" id="8OQZ">
    <property type="method" value="EM"/>
    <property type="resolution" value="3.40 A"/>
    <property type="chains" value="D=1-101"/>
</dbReference>
<dbReference type="PDB" id="8X52">
    <property type="method" value="EM"/>
    <property type="resolution" value="2.90 A"/>
    <property type="chains" value="D=1-101"/>
</dbReference>
<dbReference type="PDB" id="8X53">
    <property type="method" value="EM"/>
    <property type="resolution" value="3.00 A"/>
    <property type="chains" value="D=2-101"/>
</dbReference>
<dbReference type="PDB" id="8X54">
    <property type="method" value="EM"/>
    <property type="resolution" value="2.90 A"/>
    <property type="chains" value="D=1-101"/>
</dbReference>
<dbReference type="PDBsum" id="5A63"/>
<dbReference type="PDBsum" id="5FN2"/>
<dbReference type="PDBsum" id="5FN3"/>
<dbReference type="PDBsum" id="5FN4"/>
<dbReference type="PDBsum" id="5FN5"/>
<dbReference type="PDBsum" id="6IDF"/>
<dbReference type="PDBsum" id="6IYC"/>
<dbReference type="PDBsum" id="6LQG"/>
<dbReference type="PDBsum" id="6LR4"/>
<dbReference type="PDBsum" id="7C9I"/>
<dbReference type="PDBsum" id="7D8X"/>
<dbReference type="PDBsum" id="7Y5T"/>
<dbReference type="PDBsum" id="7Y5X"/>
<dbReference type="PDBsum" id="7Y5Z"/>
<dbReference type="PDBsum" id="8IM7"/>
<dbReference type="PDBsum" id="8K8E"/>
<dbReference type="PDBsum" id="8KCO"/>
<dbReference type="PDBsum" id="8KCP"/>
<dbReference type="PDBsum" id="8KCS"/>
<dbReference type="PDBsum" id="8KCT"/>
<dbReference type="PDBsum" id="8KCU"/>
<dbReference type="PDBsum" id="8OQY"/>
<dbReference type="PDBsum" id="8OQZ"/>
<dbReference type="PDBsum" id="8X52"/>
<dbReference type="PDBsum" id="8X53"/>
<dbReference type="PDBsum" id="8X54"/>
<dbReference type="EMDB" id="EMD-0944"/>
<dbReference type="EMDB" id="EMD-0957"/>
<dbReference type="EMDB" id="EMD-17112"/>
<dbReference type="EMDB" id="EMD-17113"/>
<dbReference type="EMDB" id="EMD-2477"/>
<dbReference type="EMDB" id="EMD-2478"/>
<dbReference type="EMDB" id="EMD-30312"/>
<dbReference type="EMDB" id="EMD-30614"/>
<dbReference type="EMDB" id="EMD-33624"/>
<dbReference type="EMDB" id="EMD-33628"/>
<dbReference type="EMDB" id="EMD-33629"/>
<dbReference type="EMDB" id="EMD-35572"/>
<dbReference type="EMDB" id="EMD-36948"/>
<dbReference type="EMDB" id="EMD-37106"/>
<dbReference type="EMDB" id="EMD-37107"/>
<dbReference type="EMDB" id="EMD-37108"/>
<dbReference type="EMDB" id="EMD-37109"/>
<dbReference type="EMDB" id="EMD-37110"/>
<dbReference type="EMDB" id="EMD-38059"/>
<dbReference type="EMDB" id="EMD-38060"/>
<dbReference type="EMDB" id="EMD-38061"/>
<dbReference type="EMDB" id="EMD-9648"/>
<dbReference type="EMDB" id="EMD-9751"/>
<dbReference type="SMR" id="Q9NZ42"/>
<dbReference type="BioGRID" id="120953">
    <property type="interactions" value="83"/>
</dbReference>
<dbReference type="ComplexPortal" id="CPX-2176">
    <property type="entry name" value="Gamma-secretase complex, APH1A-PSEN1 variant"/>
</dbReference>
<dbReference type="ComplexPortal" id="CPX-4231">
    <property type="entry name" value="Gamma-secretase complex, APH1A-PSEN2 variant"/>
</dbReference>
<dbReference type="ComplexPortal" id="CPX-4232">
    <property type="entry name" value="Gamma-secretase complex, APH1B-PSEN2 variant"/>
</dbReference>
<dbReference type="ComplexPortal" id="CPX-4233">
    <property type="entry name" value="Gamma-secretase complex, APH1B-PSEN1 variant"/>
</dbReference>
<dbReference type="CORUM" id="Q9NZ42"/>
<dbReference type="DIP" id="DIP-36337N"/>
<dbReference type="FunCoup" id="Q9NZ42">
    <property type="interactions" value="1047"/>
</dbReference>
<dbReference type="IntAct" id="Q9NZ42">
    <property type="interactions" value="81"/>
</dbReference>
<dbReference type="MINT" id="Q9NZ42"/>
<dbReference type="STRING" id="9606.ENSP00000468411"/>
<dbReference type="BindingDB" id="Q9NZ42"/>
<dbReference type="ChEMBL" id="CHEMBL2374"/>
<dbReference type="DrugBank" id="DB11893">
    <property type="generic name" value="Avagacestat"/>
</dbReference>
<dbReference type="DrugBank" id="DB12263">
    <property type="generic name" value="Begacestat"/>
</dbReference>
<dbReference type="DrugBank" id="DB05171">
    <property type="generic name" value="E-2012"/>
</dbReference>
<dbReference type="DrugBank" id="DB16159">
    <property type="generic name" value="Esflurbiprofen"/>
</dbReference>
<dbReference type="DrugBank" id="DB12819">
    <property type="generic name" value="GSI-136"/>
</dbReference>
<dbReference type="DrugBank" id="DB16825">
    <property type="generic name" value="Itanapraced"/>
</dbReference>
<dbReference type="DrugBank" id="DB12852">
    <property type="generic name" value="MK-0752"/>
</dbReference>
<dbReference type="DrugBank" id="DB12005">
    <property type="generic name" value="Nirogacestat"/>
</dbReference>
<dbReference type="DrugBank" id="DB11870">
    <property type="generic name" value="RG-4733"/>
</dbReference>
<dbReference type="DrugBank" id="DB12463">
    <property type="generic name" value="Semagacestat"/>
</dbReference>
<dbReference type="DrugBank" id="DB05289">
    <property type="generic name" value="Tarenflurbil"/>
</dbReference>
<dbReference type="iPTMnet" id="Q9NZ42"/>
<dbReference type="PhosphoSitePlus" id="Q9NZ42"/>
<dbReference type="SwissPalm" id="Q9NZ42"/>
<dbReference type="BioMuta" id="PSENEN"/>
<dbReference type="DMDM" id="37081820"/>
<dbReference type="jPOST" id="Q9NZ42"/>
<dbReference type="MassIVE" id="Q9NZ42"/>
<dbReference type="PaxDb" id="9606-ENSP00000468411"/>
<dbReference type="PeptideAtlas" id="Q9NZ42"/>
<dbReference type="ProteomicsDB" id="83319"/>
<dbReference type="Pumba" id="Q9NZ42"/>
<dbReference type="TopDownProteomics" id="Q9NZ42"/>
<dbReference type="Antibodypedia" id="4603">
    <property type="antibodies" value="255 antibodies from 36 providers"/>
</dbReference>
<dbReference type="DNASU" id="55851"/>
<dbReference type="Ensembl" id="ENST00000222266.2">
    <property type="protein sequence ID" value="ENSP00000222266.1"/>
    <property type="gene ID" value="ENSG00000205155.8"/>
</dbReference>
<dbReference type="Ensembl" id="ENST00000587708.7">
    <property type="protein sequence ID" value="ENSP00000468411.1"/>
    <property type="gene ID" value="ENSG00000205155.8"/>
</dbReference>
<dbReference type="GeneID" id="55851"/>
<dbReference type="KEGG" id="hsa:55851"/>
<dbReference type="MANE-Select" id="ENST00000587708.7">
    <property type="protein sequence ID" value="ENSP00000468411.1"/>
    <property type="RefSeq nucleotide sequence ID" value="NM_172341.4"/>
    <property type="RefSeq protein sequence ID" value="NP_758844.1"/>
</dbReference>
<dbReference type="UCSC" id="uc002obi.3">
    <property type="organism name" value="human"/>
</dbReference>
<dbReference type="AGR" id="HGNC:30100"/>
<dbReference type="CTD" id="55851"/>
<dbReference type="DisGeNET" id="55851"/>
<dbReference type="GeneCards" id="PSENEN"/>
<dbReference type="HGNC" id="HGNC:30100">
    <property type="gene designation" value="PSENEN"/>
</dbReference>
<dbReference type="HPA" id="ENSG00000205155">
    <property type="expression patterns" value="Tissue enhanced (choroid)"/>
</dbReference>
<dbReference type="MalaCards" id="PSENEN"/>
<dbReference type="MIM" id="607632">
    <property type="type" value="gene"/>
</dbReference>
<dbReference type="MIM" id="613736">
    <property type="type" value="phenotype"/>
</dbReference>
<dbReference type="neXtProt" id="NX_Q9NZ42"/>
<dbReference type="OpenTargets" id="ENSG00000205155"/>
<dbReference type="Orphanet" id="79145">
    <property type="disease" value="Dowling-Degos disease"/>
</dbReference>
<dbReference type="PharmGKB" id="PA142671122"/>
<dbReference type="VEuPathDB" id="HostDB:ENSG00000205155"/>
<dbReference type="eggNOG" id="KOG3402">
    <property type="taxonomic scope" value="Eukaryota"/>
</dbReference>
<dbReference type="GeneTree" id="ENSGT00390000016319"/>
<dbReference type="HOGENOM" id="CLU_124142_2_0_1"/>
<dbReference type="InParanoid" id="Q9NZ42"/>
<dbReference type="OMA" id="KLYLCKW"/>
<dbReference type="OrthoDB" id="524898at2759"/>
<dbReference type="PAN-GO" id="Q9NZ42">
    <property type="GO annotations" value="2 GO annotations based on evolutionary models"/>
</dbReference>
<dbReference type="PhylomeDB" id="Q9NZ42"/>
<dbReference type="PathwayCommons" id="Q9NZ42"/>
<dbReference type="Reactome" id="R-HSA-1251985">
    <property type="pathway name" value="Nuclear signaling by ERBB4"/>
</dbReference>
<dbReference type="Reactome" id="R-HSA-193692">
    <property type="pathway name" value="Regulated proteolysis of p75NTR"/>
</dbReference>
<dbReference type="Reactome" id="R-HSA-205043">
    <property type="pathway name" value="NRIF signals cell death from the nucleus"/>
</dbReference>
<dbReference type="Reactome" id="R-HSA-2122948">
    <property type="pathway name" value="Activated NOTCH1 Transmits Signal to the Nucleus"/>
</dbReference>
<dbReference type="Reactome" id="R-HSA-2644606">
    <property type="pathway name" value="Constitutive Signaling by NOTCH1 PEST Domain Mutants"/>
</dbReference>
<dbReference type="Reactome" id="R-HSA-2894862">
    <property type="pathway name" value="Constitutive Signaling by NOTCH1 HD+PEST Domain Mutants"/>
</dbReference>
<dbReference type="Reactome" id="R-HSA-2979096">
    <property type="pathway name" value="NOTCH2 Activation and Transmission of Signal to the Nucleus"/>
</dbReference>
<dbReference type="Reactome" id="R-HSA-3928665">
    <property type="pathway name" value="EPH-ephrin mediated repulsion of cells"/>
</dbReference>
<dbReference type="Reactome" id="R-HSA-9013507">
    <property type="pathway name" value="NOTCH3 Activation and Transmission of Signal to the Nucleus"/>
</dbReference>
<dbReference type="Reactome" id="R-HSA-9013700">
    <property type="pathway name" value="NOTCH4 Activation and Transmission of Signal to the Nucleus"/>
</dbReference>
<dbReference type="Reactome" id="R-HSA-9017802">
    <property type="pathway name" value="Noncanonical activation of NOTCH3"/>
</dbReference>
<dbReference type="Reactome" id="R-HSA-977225">
    <property type="pathway name" value="Amyloid fiber formation"/>
</dbReference>
<dbReference type="Reactome" id="R-HSA-9839383">
    <property type="pathway name" value="TGFBR3 PTM regulation"/>
</dbReference>
<dbReference type="SignaLink" id="Q9NZ42"/>
<dbReference type="SIGNOR" id="Q9NZ42"/>
<dbReference type="BioGRID-ORCS" id="55851">
    <property type="hits" value="37 hits in 1140 CRISPR screens"/>
</dbReference>
<dbReference type="ChiTaRS" id="PSENEN">
    <property type="organism name" value="human"/>
</dbReference>
<dbReference type="EvolutionaryTrace" id="Q9NZ42"/>
<dbReference type="GenomeRNAi" id="55851"/>
<dbReference type="Pharos" id="Q9NZ42">
    <property type="development level" value="Tchem"/>
</dbReference>
<dbReference type="PRO" id="PR:Q9NZ42"/>
<dbReference type="Proteomes" id="UP000005640">
    <property type="component" value="Chromosome 19"/>
</dbReference>
<dbReference type="RNAct" id="Q9NZ42">
    <property type="molecule type" value="protein"/>
</dbReference>
<dbReference type="Bgee" id="ENSG00000205155">
    <property type="expression patterns" value="Expressed in right uterine tube and 97 other cell types or tissues"/>
</dbReference>
<dbReference type="ExpressionAtlas" id="Q9NZ42">
    <property type="expression patterns" value="baseline and differential"/>
</dbReference>
<dbReference type="GO" id="GO:0005783">
    <property type="term" value="C:endoplasmic reticulum"/>
    <property type="evidence" value="ECO:0000314"/>
    <property type="project" value="HGNC-UCL"/>
</dbReference>
<dbReference type="GO" id="GO:0005789">
    <property type="term" value="C:endoplasmic reticulum membrane"/>
    <property type="evidence" value="ECO:0000303"/>
    <property type="project" value="ComplexPortal"/>
</dbReference>
<dbReference type="GO" id="GO:0010008">
    <property type="term" value="C:endosome membrane"/>
    <property type="evidence" value="ECO:0000304"/>
    <property type="project" value="Reactome"/>
</dbReference>
<dbReference type="GO" id="GO:0070765">
    <property type="term" value="C:gamma-secretase complex"/>
    <property type="evidence" value="ECO:0000314"/>
    <property type="project" value="UniProtKB"/>
</dbReference>
<dbReference type="GO" id="GO:0005794">
    <property type="term" value="C:Golgi apparatus"/>
    <property type="evidence" value="ECO:0000314"/>
    <property type="project" value="HGNC-UCL"/>
</dbReference>
<dbReference type="GO" id="GO:0032580">
    <property type="term" value="C:Golgi cisterna membrane"/>
    <property type="evidence" value="ECO:0007669"/>
    <property type="project" value="UniProtKB-SubCell"/>
</dbReference>
<dbReference type="GO" id="GO:0000139">
    <property type="term" value="C:Golgi membrane"/>
    <property type="evidence" value="ECO:0000303"/>
    <property type="project" value="ComplexPortal"/>
</dbReference>
<dbReference type="GO" id="GO:0016020">
    <property type="term" value="C:membrane"/>
    <property type="evidence" value="ECO:0000314"/>
    <property type="project" value="UniProtKB"/>
</dbReference>
<dbReference type="GO" id="GO:0005886">
    <property type="term" value="C:plasma membrane"/>
    <property type="evidence" value="ECO:0000314"/>
    <property type="project" value="HGNC-UCL"/>
</dbReference>
<dbReference type="GO" id="GO:0042734">
    <property type="term" value="C:presynaptic membrane"/>
    <property type="evidence" value="ECO:0007669"/>
    <property type="project" value="Ensembl"/>
</dbReference>
<dbReference type="GO" id="GO:0061133">
    <property type="term" value="F:endopeptidase activator activity"/>
    <property type="evidence" value="ECO:0000315"/>
    <property type="project" value="ARUK-UCL"/>
</dbReference>
<dbReference type="GO" id="GO:0019899">
    <property type="term" value="F:enzyme binding"/>
    <property type="evidence" value="ECO:0000353"/>
    <property type="project" value="ARUK-UCL"/>
</dbReference>
<dbReference type="GO" id="GO:0042987">
    <property type="term" value="P:amyloid precursor protein catabolic process"/>
    <property type="evidence" value="ECO:0000314"/>
    <property type="project" value="ComplexPortal"/>
</dbReference>
<dbReference type="GO" id="GO:0042982">
    <property type="term" value="P:amyloid precursor protein metabolic process"/>
    <property type="evidence" value="ECO:0000314"/>
    <property type="project" value="UniProtKB"/>
</dbReference>
<dbReference type="GO" id="GO:0034205">
    <property type="term" value="P:amyloid-beta formation"/>
    <property type="evidence" value="ECO:0000315"/>
    <property type="project" value="UniProtKB"/>
</dbReference>
<dbReference type="GO" id="GO:0006509">
    <property type="term" value="P:membrane protein ectodomain proteolysis"/>
    <property type="evidence" value="ECO:0000314"/>
    <property type="project" value="HGNC-UCL"/>
</dbReference>
<dbReference type="GO" id="GO:0031293">
    <property type="term" value="P:membrane protein intracellular domain proteolysis"/>
    <property type="evidence" value="ECO:0000314"/>
    <property type="project" value="ComplexPortal"/>
</dbReference>
<dbReference type="GO" id="GO:0007220">
    <property type="term" value="P:Notch receptor processing"/>
    <property type="evidence" value="ECO:0000318"/>
    <property type="project" value="GO_Central"/>
</dbReference>
<dbReference type="GO" id="GO:0007219">
    <property type="term" value="P:Notch signaling pathway"/>
    <property type="evidence" value="ECO:0007669"/>
    <property type="project" value="UniProtKB-KW"/>
</dbReference>
<dbReference type="GO" id="GO:0010950">
    <property type="term" value="P:positive regulation of endopeptidase activity"/>
    <property type="evidence" value="ECO:0000315"/>
    <property type="project" value="UniProtKB"/>
</dbReference>
<dbReference type="GO" id="GO:0016485">
    <property type="term" value="P:protein processing"/>
    <property type="evidence" value="ECO:0000314"/>
    <property type="project" value="HGNC-UCL"/>
</dbReference>
<dbReference type="InterPro" id="IPR019379">
    <property type="entry name" value="Gamma_Secretase_Asp_P_PEN2"/>
</dbReference>
<dbReference type="PANTHER" id="PTHR16318">
    <property type="entry name" value="GAMMA-SECRETASE SUBUNIT PEN-2"/>
    <property type="match status" value="1"/>
</dbReference>
<dbReference type="PANTHER" id="PTHR16318:SF0">
    <property type="entry name" value="GAMMA-SECRETASE SUBUNIT PEN-2"/>
    <property type="match status" value="1"/>
</dbReference>
<dbReference type="Pfam" id="PF10251">
    <property type="entry name" value="PEN-2"/>
    <property type="match status" value="1"/>
</dbReference>
<gene>
    <name type="primary">PSENEN</name>
    <name type="synonym">PEN2</name>
    <name type="ORF">MDS033</name>
</gene>
<reference key="1">
    <citation type="submission" date="1999-12" db="EMBL/GenBank/DDBJ databases">
        <title>Novel genes expressed in hematopoietic stem/progenitor cells from myelodysplastic syndrome patients.</title>
        <authorList>
            <person name="Zhao M."/>
            <person name="Gu J."/>
            <person name="Li N."/>
            <person name="Peng Y."/>
            <person name="Han Z."/>
            <person name="Chen Z."/>
        </authorList>
    </citation>
    <scope>NUCLEOTIDE SEQUENCE [LARGE SCALE MRNA]</scope>
    <source>
        <tissue>Hematopoietic stem cell</tissue>
    </source>
</reference>
<reference key="2">
    <citation type="journal article" date="2004" name="Nat. Genet.">
        <title>Complete sequencing and characterization of 21,243 full-length human cDNAs.</title>
        <authorList>
            <person name="Ota T."/>
            <person name="Suzuki Y."/>
            <person name="Nishikawa T."/>
            <person name="Otsuki T."/>
            <person name="Sugiyama T."/>
            <person name="Irie R."/>
            <person name="Wakamatsu A."/>
            <person name="Hayashi K."/>
            <person name="Sato H."/>
            <person name="Nagai K."/>
            <person name="Kimura K."/>
            <person name="Makita H."/>
            <person name="Sekine M."/>
            <person name="Obayashi M."/>
            <person name="Nishi T."/>
            <person name="Shibahara T."/>
            <person name="Tanaka T."/>
            <person name="Ishii S."/>
            <person name="Yamamoto J."/>
            <person name="Saito K."/>
            <person name="Kawai Y."/>
            <person name="Isono Y."/>
            <person name="Nakamura Y."/>
            <person name="Nagahari K."/>
            <person name="Murakami K."/>
            <person name="Yasuda T."/>
            <person name="Iwayanagi T."/>
            <person name="Wagatsuma M."/>
            <person name="Shiratori A."/>
            <person name="Sudo H."/>
            <person name="Hosoiri T."/>
            <person name="Kaku Y."/>
            <person name="Kodaira H."/>
            <person name="Kondo H."/>
            <person name="Sugawara M."/>
            <person name="Takahashi M."/>
            <person name="Kanda K."/>
            <person name="Yokoi T."/>
            <person name="Furuya T."/>
            <person name="Kikkawa E."/>
            <person name="Omura Y."/>
            <person name="Abe K."/>
            <person name="Kamihara K."/>
            <person name="Katsuta N."/>
            <person name="Sato K."/>
            <person name="Tanikawa M."/>
            <person name="Yamazaki M."/>
            <person name="Ninomiya K."/>
            <person name="Ishibashi T."/>
            <person name="Yamashita H."/>
            <person name="Murakawa K."/>
            <person name="Fujimori K."/>
            <person name="Tanai H."/>
            <person name="Kimata M."/>
            <person name="Watanabe M."/>
            <person name="Hiraoka S."/>
            <person name="Chiba Y."/>
            <person name="Ishida S."/>
            <person name="Ono Y."/>
            <person name="Takiguchi S."/>
            <person name="Watanabe S."/>
            <person name="Yosida M."/>
            <person name="Hotuta T."/>
            <person name="Kusano J."/>
            <person name="Kanehori K."/>
            <person name="Takahashi-Fujii A."/>
            <person name="Hara H."/>
            <person name="Tanase T.-O."/>
            <person name="Nomura Y."/>
            <person name="Togiya S."/>
            <person name="Komai F."/>
            <person name="Hara R."/>
            <person name="Takeuchi K."/>
            <person name="Arita M."/>
            <person name="Imose N."/>
            <person name="Musashino K."/>
            <person name="Yuuki H."/>
            <person name="Oshima A."/>
            <person name="Sasaki N."/>
            <person name="Aotsuka S."/>
            <person name="Yoshikawa Y."/>
            <person name="Matsunawa H."/>
            <person name="Ichihara T."/>
            <person name="Shiohata N."/>
            <person name="Sano S."/>
            <person name="Moriya S."/>
            <person name="Momiyama H."/>
            <person name="Satoh N."/>
            <person name="Takami S."/>
            <person name="Terashima Y."/>
            <person name="Suzuki O."/>
            <person name="Nakagawa S."/>
            <person name="Senoh A."/>
            <person name="Mizoguchi H."/>
            <person name="Goto Y."/>
            <person name="Shimizu F."/>
            <person name="Wakebe H."/>
            <person name="Hishigaki H."/>
            <person name="Watanabe T."/>
            <person name="Sugiyama A."/>
            <person name="Takemoto M."/>
            <person name="Kawakami B."/>
            <person name="Yamazaki M."/>
            <person name="Watanabe K."/>
            <person name="Kumagai A."/>
            <person name="Itakura S."/>
            <person name="Fukuzumi Y."/>
            <person name="Fujimori Y."/>
            <person name="Komiyama M."/>
            <person name="Tashiro H."/>
            <person name="Tanigami A."/>
            <person name="Fujiwara T."/>
            <person name="Ono T."/>
            <person name="Yamada K."/>
            <person name="Fujii Y."/>
            <person name="Ozaki K."/>
            <person name="Hirao M."/>
            <person name="Ohmori Y."/>
            <person name="Kawabata A."/>
            <person name="Hikiji T."/>
            <person name="Kobatake N."/>
            <person name="Inagaki H."/>
            <person name="Ikema Y."/>
            <person name="Okamoto S."/>
            <person name="Okitani R."/>
            <person name="Kawakami T."/>
            <person name="Noguchi S."/>
            <person name="Itoh T."/>
            <person name="Shigeta K."/>
            <person name="Senba T."/>
            <person name="Matsumura K."/>
            <person name="Nakajima Y."/>
            <person name="Mizuno T."/>
            <person name="Morinaga M."/>
            <person name="Sasaki M."/>
            <person name="Togashi T."/>
            <person name="Oyama M."/>
            <person name="Hata H."/>
            <person name="Watanabe M."/>
            <person name="Komatsu T."/>
            <person name="Mizushima-Sugano J."/>
            <person name="Satoh T."/>
            <person name="Shirai Y."/>
            <person name="Takahashi Y."/>
            <person name="Nakagawa K."/>
            <person name="Okumura K."/>
            <person name="Nagase T."/>
            <person name="Nomura N."/>
            <person name="Kikuchi H."/>
            <person name="Masuho Y."/>
            <person name="Yamashita R."/>
            <person name="Nakai K."/>
            <person name="Yada T."/>
            <person name="Nakamura Y."/>
            <person name="Ohara O."/>
            <person name="Isogai T."/>
            <person name="Sugano S."/>
        </authorList>
    </citation>
    <scope>NUCLEOTIDE SEQUENCE [LARGE SCALE MRNA]</scope>
    <source>
        <tissue>Uterus</tissue>
    </source>
</reference>
<reference key="3">
    <citation type="journal article" date="2004" name="Genome Res.">
        <title>The status, quality, and expansion of the NIH full-length cDNA project: the Mammalian Gene Collection (MGC).</title>
        <authorList>
            <consortium name="The MGC Project Team"/>
        </authorList>
    </citation>
    <scope>NUCLEOTIDE SEQUENCE [LARGE SCALE MRNA]</scope>
    <source>
        <tissue>Brain</tissue>
    </source>
</reference>
<reference key="4">
    <citation type="journal article" date="2002" name="J. Biol. Chem.">
        <title>PEN-2 is an integral component of the gamma-secretase complex required for coordinated expression of presenilin and nicastrin.</title>
        <authorList>
            <person name="Steiner H."/>
            <person name="Winkler E."/>
            <person name="Edbauer D."/>
            <person name="Prokop S."/>
            <person name="Basset G."/>
            <person name="Yamasaki A."/>
            <person name="Kostka M."/>
            <person name="Haass C."/>
        </authorList>
    </citation>
    <scope>INTERACTION WITH NCSTN; PSEN1 AND PSEN2</scope>
    <scope>SUBUNIT</scope>
    <scope>SUBCELLULAR LOCATION</scope>
</reference>
<reference key="5">
    <citation type="journal article" date="2002" name="Dev. Cell">
        <title>aph-1 and pen-2 are required for Notch pathway signaling, gamma-secretase cleavage of betaAPP, and presenilin protein accumulation.</title>
        <authorList>
            <person name="Francis R."/>
            <person name="McGrath G."/>
            <person name="Zhang J."/>
            <person name="Ruddy D.A."/>
            <person name="Sym M."/>
            <person name="Apfeld J."/>
            <person name="Nicoll M."/>
            <person name="Maxwell M."/>
            <person name="Hai B."/>
            <person name="Ellis M.C."/>
            <person name="Parks A.L."/>
            <person name="Xu W."/>
            <person name="Li J."/>
            <person name="Gurney M."/>
            <person name="Myers R.L."/>
            <person name="Himes C.S."/>
            <person name="Hiebsch R."/>
            <person name="Ruble C."/>
            <person name="Nye J.S."/>
            <person name="Curtis D."/>
        </authorList>
    </citation>
    <scope>TISSUE SPECIFICITY</scope>
</reference>
<reference key="6">
    <citation type="journal article" date="2003" name="J. Biol. Chem.">
        <title>PEN-2 and APH-1 coordinately regulate proteolytic processing of presenilin 1.</title>
        <authorList>
            <person name="Luo W.-J."/>
            <person name="Wang H."/>
            <person name="Li H."/>
            <person name="Kim B.S."/>
            <person name="Shah S."/>
            <person name="Lee H.-J."/>
            <person name="Thinakaran G."/>
            <person name="Kim T.-W."/>
            <person name="Yu G."/>
            <person name="Xu H."/>
        </authorList>
    </citation>
    <scope>SUBCELLULAR LOCATION</scope>
    <scope>FUNCTION</scope>
    <scope>SUBUNIT</scope>
</reference>
<reference key="7">
    <citation type="journal article" date="2003" name="J. Biol. Chem.">
        <title>Membrane topology of gamma-secretase component PEN-2.</title>
        <authorList>
            <person name="Crystal A.S."/>
            <person name="Morais V.A."/>
            <person name="Pierson T.C."/>
            <person name="Pijak D.S."/>
            <person name="Carlin D."/>
            <person name="Lee V.M."/>
            <person name="Doms R.W."/>
        </authorList>
    </citation>
    <scope>MEMBRANE TOPOLOGY</scope>
    <scope>SUBCELLULAR LOCATION</scope>
    <scope>MUTAGENESIS OF GLU-10; ALA-46 AND SER-93</scope>
</reference>
<reference key="8">
    <citation type="journal article" date="2003" name="Biochem. Biophys. Res. Commun.">
        <title>APH1, PEN2, and nicastrin increase Abeta levels and gamma-secretase activity.</title>
        <authorList>
            <person name="Marlow L."/>
            <person name="Canet R.M."/>
            <person name="Haugabook S.J."/>
            <person name="Hardy J.A."/>
            <person name="Lahiri D.K."/>
            <person name="Sambamurti K."/>
        </authorList>
    </citation>
    <scope>FUNCTION IN THE GAMMA-SECRETASE COMPLEX</scope>
</reference>
<reference key="9">
    <citation type="journal article" date="2003" name="Proc. Natl. Acad. Sci. U.S.A.">
        <title>Gamma-secretase is a membrane protein complex comprised of presenilin, nicastrin, Aph-1, and Pen-2.</title>
        <authorList>
            <person name="Kimberly W.T."/>
            <person name="LaVoie M.J."/>
            <person name="Ostaszewski B.L."/>
            <person name="Ye W."/>
            <person name="Wolfe M.S."/>
            <person name="Selkoe D.J."/>
        </authorList>
    </citation>
    <scope>TISSUE SPECIFICITY</scope>
    <scope>FUNCTION</scope>
    <scope>COMPONENT OF A GAMMA-SECRETASE COMPLEX WITH APH1A; PSEN1/PSEN2 AND NCSTN</scope>
    <scope>SUBUNIT</scope>
</reference>
<reference key="10">
    <citation type="journal article" date="2003" name="Nat. Cell Biol.">
        <title>Reconstitution of gamma-secretase activity.</title>
        <authorList>
            <person name="Edbauer D."/>
            <person name="Winkler E."/>
            <person name="Regula J.T."/>
            <person name="Pesold B."/>
            <person name="Steiner H."/>
            <person name="Haass C."/>
        </authorList>
    </citation>
    <scope>ENZYME ACTIVITY OF A GAMMA-SECRETASE COMPLEX</scope>
</reference>
<reference key="11">
    <citation type="journal article" date="2010" name="Science">
        <title>Gamma-secretase gene mutations in familial acne inversa.</title>
        <authorList>
            <person name="Wang B."/>
            <person name="Yang W."/>
            <person name="Wen W."/>
            <person name="Sun J."/>
            <person name="Su B."/>
            <person name="Liu B."/>
            <person name="Ma D."/>
            <person name="Lv D."/>
            <person name="Wen Y."/>
            <person name="Qu T."/>
            <person name="Chen M."/>
            <person name="Sun M."/>
            <person name="Shen Y."/>
            <person name="Zhang X."/>
        </authorList>
    </citation>
    <scope>INVOLVEMENT IN ACNINV2</scope>
</reference>
<reference key="12">
    <citation type="journal article" date="2014" name="Biochemistry">
        <title>Pen-2 is essential for gamma-secretase complex stability and trafficking but partially dispensable for endoproteolysis.</title>
        <authorList>
            <person name="Holmes O."/>
            <person name="Paturi S."/>
            <person name="Selkoe D.J."/>
            <person name="Wolfe M.S."/>
        </authorList>
    </citation>
    <scope>FUNCTION</scope>
    <scope>SUBUNIT</scope>
    <scope>SUBCELLULAR LOCATION</scope>
    <scope>MUTAGENESIS OF CYS-15; PHE-25; LEU-26; TRP-30; ASN-33; TRP-36; LYS-54 AND PHE-94</scope>
</reference>
<reference key="13">
    <citation type="journal article" date="2014" name="Nature">
        <title>Three-dimensional structure of human gamma-secretase.</title>
        <authorList>
            <person name="Lu P."/>
            <person name="Bai X.C."/>
            <person name="Ma D."/>
            <person name="Xie T."/>
            <person name="Yan C."/>
            <person name="Sun L."/>
            <person name="Yang G."/>
            <person name="Zhao Y."/>
            <person name="Zhou R."/>
            <person name="Scheres S.H."/>
            <person name="Shi Y."/>
        </authorList>
    </citation>
    <scope>STRUCTURE BY ELECTRON MICROSCOPY (4.5 ANGSTROMS)</scope>
    <scope>FUNCTION</scope>
    <scope>SUBCELLULAR LOCATION</scope>
    <scope>TOPOLOGY</scope>
    <scope>SUBUNIT</scope>
</reference>
<reference key="14">
    <citation type="journal article" date="2015" name="Elife">
        <title>Sampling the conformational space of the catalytic subunit of human gamma-secretase.</title>
        <authorList>
            <person name="Bai X.C."/>
            <person name="Rajendra E."/>
            <person name="Yang G."/>
            <person name="Shi Y."/>
            <person name="Scheres S.H."/>
        </authorList>
    </citation>
    <scope>STRUCTURE BY ELECTRON MICROSCOPY (4.00 ANGSTROMS)</scope>
    <scope>SUBUNIT</scope>
    <scope>SUBCELLULAR LOCATION</scope>
    <scope>TOPOLOGY</scope>
</reference>
<reference key="15">
    <citation type="journal article" date="2015" name="Nature">
        <title>An atomic structure of human gamma-secretase.</title>
        <authorList>
            <person name="Bai X.C."/>
            <person name="Yan C."/>
            <person name="Yang G."/>
            <person name="Lu P."/>
            <person name="Ma D."/>
            <person name="Sun L."/>
            <person name="Zhou R."/>
            <person name="Scheres S.H."/>
            <person name="Shi Y."/>
        </authorList>
    </citation>
    <scope>STRUCTURE BY ELECTRON MICROSCOPY (3.40 ANGSTROMS)</scope>
    <scope>FUNCTION</scope>
    <scope>SUBCELLULAR LOCATION</scope>
    <scope>TOPOLOGY</scope>
    <scope>SUBUNIT</scope>
</reference>
<reference key="16">
    <citation type="journal article" date="2019" name="Nature">
        <title>Structural basis of Notch recognition by human gamma-secretase.</title>
        <authorList>
            <person name="Yang G."/>
            <person name="Zhou R."/>
            <person name="Zhou Q."/>
            <person name="Guo X."/>
            <person name="Yan C."/>
            <person name="Ke M."/>
            <person name="Lei J."/>
            <person name="Shi Y."/>
        </authorList>
    </citation>
    <scope>STRUCTURE BY ELECTRON MICROSCOPY (2.70 ANGSTROMS)</scope>
    <scope>SUBUNIT</scope>
    <scope>FUNCTION</scope>
    <scope>TOPOLOGY</scope>
</reference>
<reference key="17">
    <citation type="journal article" date="2019" name="Science">
        <title>Recognition of the amyloid precursor protein by human gamma-secretase.</title>
        <authorList>
            <person name="Zhou R."/>
            <person name="Yang G."/>
            <person name="Guo X."/>
            <person name="Zhou Q."/>
            <person name="Lei J."/>
            <person name="Shi Y."/>
        </authorList>
    </citation>
    <scope>STRUCTURE BY ELECTRON MICROSCOPY (2.60 ANGSTROMS)</scope>
    <scope>SUBUNIT</scope>
    <scope>FUNCTION</scope>
    <scope>TOPOLOGY</scope>
</reference>
<accession>Q9NZ42</accession>
<accession>B2R5L9</accession>
<feature type="chain" id="PRO_0000190900" description="Gamma-secretase subunit PEN-2">
    <location>
        <begin position="1"/>
        <end position="101"/>
    </location>
</feature>
<feature type="topological domain" description="Cytoplasmic" evidence="11">
    <location>
        <begin position="1"/>
        <end position="17"/>
    </location>
</feature>
<feature type="intramembrane region" description="Helical" evidence="11">
    <location>
        <begin position="18"/>
        <end position="36"/>
    </location>
</feature>
<feature type="topological domain" description="Cytoplasmic" evidence="11">
    <location>
        <begin position="37"/>
        <end position="57"/>
    </location>
</feature>
<feature type="transmembrane region" description="Helical" evidence="11">
    <location>
        <begin position="58"/>
        <end position="78"/>
    </location>
</feature>
<feature type="topological domain" description="Lumenal" evidence="11 16">
    <location>
        <begin position="79"/>
        <end position="101"/>
    </location>
</feature>
<feature type="mutagenesis site" description="Induces a N-linked glycosylation on N-8." evidence="4">
    <original>E</original>
    <variation>S</variation>
    <location>
        <position position="10"/>
    </location>
</feature>
<feature type="mutagenesis site" description="Decreased APP processing by the gamma-secretase complex." evidence="9">
    <original>C</original>
    <variation>A</variation>
    <location>
        <position position="15"/>
    </location>
</feature>
<feature type="mutagenesis site" description="No effect on APP processing by the gamma-secretase complex." evidence="9">
    <original>C</original>
    <variation>S</variation>
    <location>
        <position position="15"/>
    </location>
</feature>
<feature type="mutagenesis site" description="Decreased APP processing by the gamma-secretase complex." evidence="9">
    <original>F</original>
    <variation>A</variation>
    <location>
        <position position="25"/>
    </location>
</feature>
<feature type="mutagenesis site" description="Decreased APP processing by the gamma-secretase complex." evidence="9">
    <original>L</original>
    <variation>A</variation>
    <location>
        <position position="26"/>
    </location>
</feature>
<feature type="mutagenesis site" description="Decreased expression levels, and decreased stimulation of presenilin endoproteolysis." evidence="9">
    <original>W</original>
    <variation>A</variation>
    <location>
        <position position="30"/>
    </location>
</feature>
<feature type="mutagenesis site" description="Increased expression at the cell membrane." evidence="9">
    <original>N</original>
    <variation>A</variation>
    <location>
        <position position="33"/>
    </location>
</feature>
<feature type="mutagenesis site" description="Decreased APP processing by the gamma-secretase complex." evidence="9">
    <original>W</original>
    <variation>A</variation>
    <location>
        <position position="36"/>
    </location>
</feature>
<feature type="mutagenesis site" description="No effect." evidence="4">
    <original>A</original>
    <variation>N</variation>
    <location>
        <position position="46"/>
    </location>
</feature>
<feature type="mutagenesis site" description="Decreased APP processing by the gamma-secretase complex." evidence="9">
    <original>K</original>
    <variation>A</variation>
    <location>
        <position position="54"/>
    </location>
</feature>
<feature type="mutagenesis site" description="Induces a N-linked glycosylation." evidence="4">
    <original>S</original>
    <variation>N</variation>
    <location>
        <position position="93"/>
    </location>
</feature>
<feature type="mutagenesis site" description="Decreased APP processing by the gamma-secretase complex." evidence="9">
    <original>F</original>
    <variation>A</variation>
    <location>
        <position position="94"/>
    </location>
</feature>
<feature type="strand" evidence="17">
    <location>
        <begin position="4"/>
        <end position="6"/>
    </location>
</feature>
<feature type="helix" evidence="18">
    <location>
        <begin position="8"/>
        <end position="21"/>
    </location>
</feature>
<feature type="turn" evidence="18">
    <location>
        <begin position="22"/>
        <end position="25"/>
    </location>
</feature>
<feature type="helix" evidence="18">
    <location>
        <begin position="27"/>
        <end position="36"/>
    </location>
</feature>
<feature type="helix" evidence="18">
    <location>
        <begin position="39"/>
        <end position="42"/>
    </location>
</feature>
<feature type="strand" evidence="18">
    <location>
        <begin position="47"/>
        <end position="49"/>
    </location>
</feature>
<feature type="helix" evidence="18">
    <location>
        <begin position="50"/>
        <end position="81"/>
    </location>
</feature>
<feature type="turn" evidence="18">
    <location>
        <begin position="82"/>
        <end position="84"/>
    </location>
</feature>
<feature type="helix" evidence="18">
    <location>
        <begin position="87"/>
        <end position="91"/>
    </location>
</feature>
<feature type="strand" evidence="18">
    <location>
        <begin position="93"/>
        <end position="95"/>
    </location>
</feature>
<organism>
    <name type="scientific">Homo sapiens</name>
    <name type="common">Human</name>
    <dbReference type="NCBI Taxonomy" id="9606"/>
    <lineage>
        <taxon>Eukaryota</taxon>
        <taxon>Metazoa</taxon>
        <taxon>Chordata</taxon>
        <taxon>Craniata</taxon>
        <taxon>Vertebrata</taxon>
        <taxon>Euteleostomi</taxon>
        <taxon>Mammalia</taxon>
        <taxon>Eutheria</taxon>
        <taxon>Euarchontoglires</taxon>
        <taxon>Primates</taxon>
        <taxon>Haplorrhini</taxon>
        <taxon>Catarrhini</taxon>
        <taxon>Hominidae</taxon>
        <taxon>Homo</taxon>
    </lineage>
</organism>